<organism>
    <name type="scientific">Brucella abortus biovar 1 (strain 9-941)</name>
    <dbReference type="NCBI Taxonomy" id="262698"/>
    <lineage>
        <taxon>Bacteria</taxon>
        <taxon>Pseudomonadati</taxon>
        <taxon>Pseudomonadota</taxon>
        <taxon>Alphaproteobacteria</taxon>
        <taxon>Hyphomicrobiales</taxon>
        <taxon>Brucellaceae</taxon>
        <taxon>Brucella/Ochrobactrum group</taxon>
        <taxon>Brucella</taxon>
    </lineage>
</organism>
<sequence length="66" mass="7512">MKAADVRAKSLDQLNDELGTLKKEQFNLRFQKATGQLEKTARVKQVRRDIARIKTIARQKAAESKA</sequence>
<protein>
    <recommendedName>
        <fullName evidence="1">Large ribosomal subunit protein uL29</fullName>
    </recommendedName>
    <alternativeName>
        <fullName evidence="2">50S ribosomal protein L29</fullName>
    </alternativeName>
</protein>
<comment type="similarity">
    <text evidence="1">Belongs to the universal ribosomal protein uL29 family.</text>
</comment>
<proteinExistence type="inferred from homology"/>
<name>RL29_BRUAB</name>
<gene>
    <name evidence="1" type="primary">rpmC</name>
    <name type="ordered locus">BruAb1_1230</name>
</gene>
<reference key="1">
    <citation type="journal article" date="2005" name="J. Bacteriol.">
        <title>Completion of the genome sequence of Brucella abortus and comparison to the highly similar genomes of Brucella melitensis and Brucella suis.</title>
        <authorList>
            <person name="Halling S.M."/>
            <person name="Peterson-Burch B.D."/>
            <person name="Bricker B.J."/>
            <person name="Zuerner R.L."/>
            <person name="Qing Z."/>
            <person name="Li L.-L."/>
            <person name="Kapur V."/>
            <person name="Alt D.P."/>
            <person name="Olsen S.C."/>
        </authorList>
    </citation>
    <scope>NUCLEOTIDE SEQUENCE [LARGE SCALE GENOMIC DNA]</scope>
    <source>
        <strain>9-941</strain>
    </source>
</reference>
<keyword id="KW-0687">Ribonucleoprotein</keyword>
<keyword id="KW-0689">Ribosomal protein</keyword>
<feature type="chain" id="PRO_1000007429" description="Large ribosomal subunit protein uL29">
    <location>
        <begin position="1"/>
        <end position="66"/>
    </location>
</feature>
<evidence type="ECO:0000255" key="1">
    <source>
        <dbReference type="HAMAP-Rule" id="MF_00374"/>
    </source>
</evidence>
<evidence type="ECO:0000305" key="2"/>
<dbReference type="EMBL" id="AE017223">
    <property type="protein sequence ID" value="AAX74568.1"/>
    <property type="molecule type" value="Genomic_DNA"/>
</dbReference>
<dbReference type="RefSeq" id="WP_002964354.1">
    <property type="nucleotide sequence ID" value="NC_006932.1"/>
</dbReference>
<dbReference type="SMR" id="Q57CR6"/>
<dbReference type="EnsemblBacteria" id="AAX74568">
    <property type="protein sequence ID" value="AAX74568"/>
    <property type="gene ID" value="BruAb1_1230"/>
</dbReference>
<dbReference type="GeneID" id="97533532"/>
<dbReference type="KEGG" id="bmb:BruAb1_1230"/>
<dbReference type="HOGENOM" id="CLU_158491_1_0_5"/>
<dbReference type="Proteomes" id="UP000000540">
    <property type="component" value="Chromosome I"/>
</dbReference>
<dbReference type="GO" id="GO:0022625">
    <property type="term" value="C:cytosolic large ribosomal subunit"/>
    <property type="evidence" value="ECO:0007669"/>
    <property type="project" value="TreeGrafter"/>
</dbReference>
<dbReference type="GO" id="GO:0003735">
    <property type="term" value="F:structural constituent of ribosome"/>
    <property type="evidence" value="ECO:0007669"/>
    <property type="project" value="InterPro"/>
</dbReference>
<dbReference type="GO" id="GO:0006412">
    <property type="term" value="P:translation"/>
    <property type="evidence" value="ECO:0007669"/>
    <property type="project" value="UniProtKB-UniRule"/>
</dbReference>
<dbReference type="CDD" id="cd00427">
    <property type="entry name" value="Ribosomal_L29_HIP"/>
    <property type="match status" value="1"/>
</dbReference>
<dbReference type="FunFam" id="1.10.287.310:FF:000001">
    <property type="entry name" value="50S ribosomal protein L29"/>
    <property type="match status" value="1"/>
</dbReference>
<dbReference type="Gene3D" id="1.10.287.310">
    <property type="match status" value="1"/>
</dbReference>
<dbReference type="HAMAP" id="MF_00374">
    <property type="entry name" value="Ribosomal_uL29"/>
    <property type="match status" value="1"/>
</dbReference>
<dbReference type="InterPro" id="IPR050063">
    <property type="entry name" value="Ribosomal_protein_uL29"/>
</dbReference>
<dbReference type="InterPro" id="IPR001854">
    <property type="entry name" value="Ribosomal_uL29"/>
</dbReference>
<dbReference type="InterPro" id="IPR018254">
    <property type="entry name" value="Ribosomal_uL29_CS"/>
</dbReference>
<dbReference type="InterPro" id="IPR036049">
    <property type="entry name" value="Ribosomal_uL29_sf"/>
</dbReference>
<dbReference type="NCBIfam" id="TIGR00012">
    <property type="entry name" value="L29"/>
    <property type="match status" value="1"/>
</dbReference>
<dbReference type="PANTHER" id="PTHR10916">
    <property type="entry name" value="60S RIBOSOMAL PROTEIN L35/50S RIBOSOMAL PROTEIN L29"/>
    <property type="match status" value="1"/>
</dbReference>
<dbReference type="PANTHER" id="PTHR10916:SF0">
    <property type="entry name" value="LARGE RIBOSOMAL SUBUNIT PROTEIN UL29C"/>
    <property type="match status" value="1"/>
</dbReference>
<dbReference type="Pfam" id="PF00831">
    <property type="entry name" value="Ribosomal_L29"/>
    <property type="match status" value="1"/>
</dbReference>
<dbReference type="SUPFAM" id="SSF46561">
    <property type="entry name" value="Ribosomal protein L29 (L29p)"/>
    <property type="match status" value="1"/>
</dbReference>
<dbReference type="PROSITE" id="PS00579">
    <property type="entry name" value="RIBOSOMAL_L29"/>
    <property type="match status" value="1"/>
</dbReference>
<accession>Q57CR6</accession>